<organism>
    <name type="scientific">Clostridium botulinum (strain ATCC 19397 / Type A)</name>
    <dbReference type="NCBI Taxonomy" id="441770"/>
    <lineage>
        <taxon>Bacteria</taxon>
        <taxon>Bacillati</taxon>
        <taxon>Bacillota</taxon>
        <taxon>Clostridia</taxon>
        <taxon>Eubacteriales</taxon>
        <taxon>Clostridiaceae</taxon>
        <taxon>Clostridium</taxon>
    </lineage>
</organism>
<proteinExistence type="inferred from homology"/>
<name>Y1397_CLOB1</name>
<gene>
    <name type="ordered locus">CLB_1397</name>
</gene>
<comment type="similarity">
    <text evidence="1">Belongs to the UPF0251 family.</text>
</comment>
<accession>A7FTP7</accession>
<reference key="1">
    <citation type="journal article" date="2007" name="PLoS ONE">
        <title>Analysis of the neurotoxin complex genes in Clostridium botulinum A1-A4 and B1 strains: BoNT/A3, /Ba4 and /B1 clusters are located within plasmids.</title>
        <authorList>
            <person name="Smith T.J."/>
            <person name="Hill K.K."/>
            <person name="Foley B.T."/>
            <person name="Detter J.C."/>
            <person name="Munk A.C."/>
            <person name="Bruce D.C."/>
            <person name="Doggett N.A."/>
            <person name="Smith L.A."/>
            <person name="Marks J.D."/>
            <person name="Xie G."/>
            <person name="Brettin T.S."/>
        </authorList>
    </citation>
    <scope>NUCLEOTIDE SEQUENCE [LARGE SCALE GENOMIC DNA]</scope>
    <source>
        <strain>ATCC 19397 / Type A</strain>
    </source>
</reference>
<protein>
    <recommendedName>
        <fullName evidence="1">UPF0251 protein CLB_1397</fullName>
    </recommendedName>
</protein>
<feature type="chain" id="PRO_1000044742" description="UPF0251 protein CLB_1397">
    <location>
        <begin position="1"/>
        <end position="157"/>
    </location>
</feature>
<dbReference type="EMBL" id="CP000726">
    <property type="protein sequence ID" value="ABS34387.1"/>
    <property type="molecule type" value="Genomic_DNA"/>
</dbReference>
<dbReference type="RefSeq" id="WP_003358683.1">
    <property type="nucleotide sequence ID" value="NC_009697.1"/>
</dbReference>
<dbReference type="KEGG" id="cba:CLB_1397"/>
<dbReference type="HOGENOM" id="CLU_094511_0_1_9"/>
<dbReference type="HAMAP" id="MF_00674">
    <property type="entry name" value="UPF0251"/>
    <property type="match status" value="1"/>
</dbReference>
<dbReference type="InterPro" id="IPR013324">
    <property type="entry name" value="RNA_pol_sigma_r3/r4-like"/>
</dbReference>
<dbReference type="InterPro" id="IPR002852">
    <property type="entry name" value="UPF0251"/>
</dbReference>
<dbReference type="PANTHER" id="PTHR37478">
    <property type="match status" value="1"/>
</dbReference>
<dbReference type="PANTHER" id="PTHR37478:SF2">
    <property type="entry name" value="UPF0251 PROTEIN TK0562"/>
    <property type="match status" value="1"/>
</dbReference>
<dbReference type="Pfam" id="PF02001">
    <property type="entry name" value="DUF134"/>
    <property type="match status" value="1"/>
</dbReference>
<dbReference type="SUPFAM" id="SSF88659">
    <property type="entry name" value="Sigma3 and sigma4 domains of RNA polymerase sigma factors"/>
    <property type="match status" value="1"/>
</dbReference>
<sequence>MPRPTKFRRVEFFPENNYFVPWGKPKCEIHEVVLKVEELEAMRLKDIEELNQEQCAEKMEISRQTFQNIIDSARKKVAIALTEGKAIKISGGHYTTKLCKLKCIDCEEIYEINYEQDRHLCPNCGSEKVICNKKADFCRRWCKGQNRKEQYEESKNK</sequence>
<evidence type="ECO:0000255" key="1">
    <source>
        <dbReference type="HAMAP-Rule" id="MF_00674"/>
    </source>
</evidence>